<accession>P06908</accession>
<sequence>MWLRCLALALTLLMVSGIENNTKDVCVGNPGIPGTPGSHGLPGRDGRDGVKGDPGPPGPLGPPGGMPGHPGPNGMTGAPGVAGERGEKGEPGERGPPGLPASLDEELQTTLHDLRHQILQTMGVLSLHESLLVVGRKVFSSNAQSINFNDIQELCAGAGGQIAAPMSPEENEAVASIVKKYNTYAYLGLVESPDSGDFQYMDGAPVNYTNWYPGEPRGRGKEQCVEMYTDGQWNNKNCLQYRLAICEF</sequence>
<gene>
    <name type="primary">SFTPA1</name>
    <name type="synonym">SFTP1</name>
    <name type="synonym">SFTPA</name>
</gene>
<protein>
    <recommendedName>
        <fullName>Pulmonary surfactant-associated protein A</fullName>
        <shortName>PSAP</shortName>
        <shortName>PSP-A</shortName>
        <shortName>SP-A</shortName>
    </recommendedName>
</protein>
<reference key="1">
    <citation type="journal article" date="1985" name="Proc. Natl. Acad. Sci. U.S.A.">
        <title>Structure of canine pulmonary surfactant apoprotein: cDNA and complete amino acid sequence.</title>
        <authorList>
            <person name="Benson B."/>
            <person name="Hawgood S."/>
            <person name="Schilling J."/>
            <person name="Clements J."/>
            <person name="Damm D."/>
            <person name="Cordell B."/>
            <person name="White R.T."/>
        </authorList>
    </citation>
    <scope>NUCLEOTIDE SEQUENCE [MRNA]</scope>
    <scope>SIGNAL SEQUENCE CLEAVAGE SITE</scope>
</reference>
<reference key="2">
    <citation type="journal article" date="1987" name="Nature">
        <title>Is lung surfactant protein a lectin-collagen hybrid?</title>
        <authorList>
            <person name="Patthy L."/>
        </authorList>
    </citation>
    <scope>DOMAIN</scope>
</reference>
<keyword id="KW-0106">Calcium</keyword>
<keyword id="KW-0176">Collagen</keyword>
<keyword id="KW-1015">Disulfide bond</keyword>
<keyword id="KW-0272">Extracellular matrix</keyword>
<keyword id="KW-0305">Gaseous exchange</keyword>
<keyword id="KW-0325">Glycoprotein</keyword>
<keyword id="KW-0379">Hydroxylation</keyword>
<keyword id="KW-0430">Lectin</keyword>
<keyword id="KW-0479">Metal-binding</keyword>
<keyword id="KW-1185">Reference proteome</keyword>
<keyword id="KW-0677">Repeat</keyword>
<keyword id="KW-0964">Secreted</keyword>
<keyword id="KW-0732">Signal</keyword>
<keyword id="KW-0767">Surface film</keyword>
<feature type="signal peptide" evidence="7">
    <location>
        <begin position="1"/>
        <end position="17"/>
    </location>
</feature>
<feature type="chain" id="PRO_0000017454" description="Pulmonary surfactant-associated protein A">
    <location>
        <begin position="18"/>
        <end position="248"/>
    </location>
</feature>
<feature type="domain" description="Collagen-like">
    <location>
        <begin position="28"/>
        <end position="100"/>
    </location>
</feature>
<feature type="domain" description="C-type lectin" evidence="5">
    <location>
        <begin position="132"/>
        <end position="248"/>
    </location>
</feature>
<feature type="region of interest" description="Disordered" evidence="6">
    <location>
        <begin position="29"/>
        <end position="103"/>
    </location>
</feature>
<feature type="compositionally biased region" description="Basic and acidic residues" evidence="6">
    <location>
        <begin position="42"/>
        <end position="51"/>
    </location>
</feature>
<feature type="compositionally biased region" description="Pro residues" evidence="6">
    <location>
        <begin position="54"/>
        <end position="65"/>
    </location>
</feature>
<feature type="compositionally biased region" description="Basic and acidic residues" evidence="6">
    <location>
        <begin position="84"/>
        <end position="93"/>
    </location>
</feature>
<feature type="binding site" evidence="1">
    <location>
        <position position="215"/>
    </location>
    <ligand>
        <name>Ca(2+)</name>
        <dbReference type="ChEBI" id="CHEBI:29108"/>
    </ligand>
</feature>
<feature type="binding site" evidence="1">
    <location>
        <position position="217"/>
    </location>
    <ligand>
        <name>Ca(2+)</name>
        <dbReference type="ChEBI" id="CHEBI:29108"/>
    </ligand>
</feature>
<feature type="binding site" evidence="1">
    <location>
        <position position="234"/>
    </location>
    <ligand>
        <name>Ca(2+)</name>
        <dbReference type="ChEBI" id="CHEBI:29108"/>
    </ligand>
</feature>
<feature type="modified residue" description="4-hydroxyproline" evidence="1">
    <location>
        <position position="30"/>
    </location>
</feature>
<feature type="modified residue" description="4-hydroxyproline" evidence="1">
    <location>
        <position position="33"/>
    </location>
</feature>
<feature type="modified residue" description="4-hydroxyproline" evidence="1">
    <location>
        <position position="36"/>
    </location>
</feature>
<feature type="modified residue" description="4-hydroxyproline" evidence="1">
    <location>
        <position position="42"/>
    </location>
</feature>
<feature type="modified residue" description="4-hydroxyproline" evidence="1">
    <location>
        <position position="54"/>
    </location>
</feature>
<feature type="modified residue" description="4-hydroxyproline" evidence="1">
    <location>
        <position position="57"/>
    </location>
</feature>
<feature type="modified residue" description="4-hydroxyproline" evidence="1">
    <location>
        <position position="63"/>
    </location>
</feature>
<feature type="modified residue" description="4-hydroxyproline" evidence="1">
    <location>
        <position position="67"/>
    </location>
</feature>
<feature type="modified residue" description="4-hydroxyproline" evidence="1">
    <location>
        <position position="70"/>
    </location>
</feature>
<feature type="glycosylation site" description="N-linked (GlcNAc...) asparagine" evidence="4">
    <location>
        <position position="20"/>
    </location>
</feature>
<feature type="glycosylation site" description="N-linked (GlcNAc...) asparagine" evidence="8">
    <location>
        <position position="207"/>
    </location>
</feature>
<feature type="disulfide bond" evidence="5">
    <location>
        <begin position="155"/>
        <end position="246"/>
    </location>
</feature>
<feature type="disulfide bond" evidence="5">
    <location>
        <begin position="224"/>
        <end position="238"/>
    </location>
</feature>
<organism>
    <name type="scientific">Canis lupus familiaris</name>
    <name type="common">Dog</name>
    <name type="synonym">Canis familiaris</name>
    <dbReference type="NCBI Taxonomy" id="9615"/>
    <lineage>
        <taxon>Eukaryota</taxon>
        <taxon>Metazoa</taxon>
        <taxon>Chordata</taxon>
        <taxon>Craniata</taxon>
        <taxon>Vertebrata</taxon>
        <taxon>Euteleostomi</taxon>
        <taxon>Mammalia</taxon>
        <taxon>Eutheria</taxon>
        <taxon>Laurasiatheria</taxon>
        <taxon>Carnivora</taxon>
        <taxon>Caniformia</taxon>
        <taxon>Canidae</taxon>
        <taxon>Canis</taxon>
    </lineage>
</organism>
<comment type="function">
    <text evidence="2">In presence of calcium ions, it binds to surfactant phospholipids and contributes to lower the surface tension at the air-liquid interface in the alveoli of the mammalian lung and is essential for normal respiration. Enhances the expression of MYO18A/SP-R210 on alveolar macrophages.</text>
</comment>
<comment type="subunit">
    <text evidence="3">Oligomeric complex of 6 set of homotrimers.</text>
</comment>
<comment type="subcellular location">
    <subcellularLocation>
        <location evidence="3">Secreted</location>
    </subcellularLocation>
    <subcellularLocation>
        <location evidence="3">Secreted</location>
        <location evidence="3">Extracellular space</location>
        <location evidence="3">Extracellular matrix</location>
    </subcellularLocation>
    <subcellularLocation>
        <location evidence="3">Secreted</location>
        <location evidence="3">Extracellular space</location>
        <location evidence="3">Surface film</location>
    </subcellularLocation>
</comment>
<comment type="miscellaneous">
    <text>Pulmonary surfactant consists of 90% lipid and 10% protein. There are 4 surfactant-associated proteins: 2 collagenous, carbohydrate-binding glycoproteins (SP-A and SP-D) and 2 small hydrophobic proteins (SP-B and SP-C).</text>
</comment>
<comment type="similarity">
    <text evidence="8">Belongs to the SFTPA family.</text>
</comment>
<dbReference type="EMBL" id="M11769">
    <property type="protein sequence ID" value="AAA30887.1"/>
    <property type="molecule type" value="mRNA"/>
</dbReference>
<dbReference type="PIR" id="A25296">
    <property type="entry name" value="LNDGPS"/>
</dbReference>
<dbReference type="SMR" id="P06908"/>
<dbReference type="FunCoup" id="P06908">
    <property type="interactions" value="22"/>
</dbReference>
<dbReference type="STRING" id="9615.ENSCAFP00000023171"/>
<dbReference type="GlyCosmos" id="P06908">
    <property type="glycosylation" value="2 sites, No reported glycans"/>
</dbReference>
<dbReference type="PaxDb" id="9612-ENSCAFP00000036831"/>
<dbReference type="InParanoid" id="P06908"/>
<dbReference type="Proteomes" id="UP000002254">
    <property type="component" value="Unplaced"/>
</dbReference>
<dbReference type="Proteomes" id="UP000694429">
    <property type="component" value="Unplaced"/>
</dbReference>
<dbReference type="Proteomes" id="UP000694542">
    <property type="component" value="Unplaced"/>
</dbReference>
<dbReference type="Proteomes" id="UP000805418">
    <property type="component" value="Unplaced"/>
</dbReference>
<dbReference type="GO" id="GO:0005581">
    <property type="term" value="C:collagen trimer"/>
    <property type="evidence" value="ECO:0007669"/>
    <property type="project" value="UniProtKB-KW"/>
</dbReference>
<dbReference type="GO" id="GO:0005615">
    <property type="term" value="C:extracellular space"/>
    <property type="evidence" value="ECO:0000318"/>
    <property type="project" value="GO_Central"/>
</dbReference>
<dbReference type="GO" id="GO:0005771">
    <property type="term" value="C:multivesicular body"/>
    <property type="evidence" value="ECO:0000318"/>
    <property type="project" value="GO_Central"/>
</dbReference>
<dbReference type="GO" id="GO:0030246">
    <property type="term" value="F:carbohydrate binding"/>
    <property type="evidence" value="ECO:0007669"/>
    <property type="project" value="UniProtKB-KW"/>
</dbReference>
<dbReference type="GO" id="GO:0046872">
    <property type="term" value="F:metal ion binding"/>
    <property type="evidence" value="ECO:0007669"/>
    <property type="project" value="UniProtKB-KW"/>
</dbReference>
<dbReference type="GO" id="GO:0007585">
    <property type="term" value="P:respiratory gaseous exchange by respiratory system"/>
    <property type="evidence" value="ECO:0007669"/>
    <property type="project" value="UniProtKB-KW"/>
</dbReference>
<dbReference type="CDD" id="cd03591">
    <property type="entry name" value="CLECT_collectin_like"/>
    <property type="match status" value="1"/>
</dbReference>
<dbReference type="FunFam" id="3.10.100.10:FF:000056">
    <property type="entry name" value="Pulmonary surfactant-associated protein A"/>
    <property type="match status" value="1"/>
</dbReference>
<dbReference type="Gene3D" id="3.10.100.10">
    <property type="entry name" value="Mannose-Binding Protein A, subunit A"/>
    <property type="match status" value="1"/>
</dbReference>
<dbReference type="InterPro" id="IPR001304">
    <property type="entry name" value="C-type_lectin-like"/>
</dbReference>
<dbReference type="InterPro" id="IPR016186">
    <property type="entry name" value="C-type_lectin-like/link_sf"/>
</dbReference>
<dbReference type="InterPro" id="IPR018378">
    <property type="entry name" value="C-type_lectin_CS"/>
</dbReference>
<dbReference type="InterPro" id="IPR051077">
    <property type="entry name" value="Ca-dependent_lectin"/>
</dbReference>
<dbReference type="InterPro" id="IPR033990">
    <property type="entry name" value="Collectin_CTLD"/>
</dbReference>
<dbReference type="InterPro" id="IPR016187">
    <property type="entry name" value="CTDL_fold"/>
</dbReference>
<dbReference type="PANTHER" id="PTHR24024">
    <property type="entry name" value="PULMONARY SURFACTANT-ASSOCIATED PROTEIN A"/>
    <property type="match status" value="1"/>
</dbReference>
<dbReference type="PANTHER" id="PTHR24024:SF13">
    <property type="entry name" value="PULMONARY SURFACTANT-ASSOCIATED PROTEIN A1"/>
    <property type="match status" value="1"/>
</dbReference>
<dbReference type="Pfam" id="PF00059">
    <property type="entry name" value="Lectin_C"/>
    <property type="match status" value="1"/>
</dbReference>
<dbReference type="SMART" id="SM00034">
    <property type="entry name" value="CLECT"/>
    <property type="match status" value="1"/>
</dbReference>
<dbReference type="SUPFAM" id="SSF56436">
    <property type="entry name" value="C-type lectin-like"/>
    <property type="match status" value="1"/>
</dbReference>
<dbReference type="SUPFAM" id="SSF57944">
    <property type="entry name" value="Triple coiled coil domain of C-type lectins"/>
    <property type="match status" value="1"/>
</dbReference>
<dbReference type="PROSITE" id="PS00615">
    <property type="entry name" value="C_TYPE_LECTIN_1"/>
    <property type="match status" value="1"/>
</dbReference>
<dbReference type="PROSITE" id="PS50041">
    <property type="entry name" value="C_TYPE_LECTIN_2"/>
    <property type="match status" value="1"/>
</dbReference>
<proteinExistence type="evidence at protein level"/>
<name>SFTPA_CANLF</name>
<evidence type="ECO:0000250" key="1"/>
<evidence type="ECO:0000250" key="2">
    <source>
        <dbReference type="UniProtKB" id="P35242"/>
    </source>
</evidence>
<evidence type="ECO:0000250" key="3">
    <source>
        <dbReference type="UniProtKB" id="Q8IWL2"/>
    </source>
</evidence>
<evidence type="ECO:0000255" key="4"/>
<evidence type="ECO:0000255" key="5">
    <source>
        <dbReference type="PROSITE-ProRule" id="PRU00040"/>
    </source>
</evidence>
<evidence type="ECO:0000256" key="6">
    <source>
        <dbReference type="SAM" id="MobiDB-lite"/>
    </source>
</evidence>
<evidence type="ECO:0000269" key="7">
    <source>
    </source>
</evidence>
<evidence type="ECO:0000305" key="8"/>